<comment type="function">
    <text evidence="1">Ring cyclization and eight-electron oxidation of 3a-(2-amino-2-carboxyethyl)-4,5-dioxo-4,5,6,7,8,9-hexahydroquinoline-7,9-dicarboxylic-acid to PQQ.</text>
</comment>
<comment type="catalytic activity">
    <reaction evidence="1">
        <text>6-(2-amino-2-carboxyethyl)-7,8-dioxo-1,2,3,4,7,8-hexahydroquinoline-2,4-dicarboxylate + 3 O2 = pyrroloquinoline quinone + 2 H2O2 + 2 H2O + H(+)</text>
        <dbReference type="Rhea" id="RHEA:10692"/>
        <dbReference type="ChEBI" id="CHEBI:15377"/>
        <dbReference type="ChEBI" id="CHEBI:15378"/>
        <dbReference type="ChEBI" id="CHEBI:15379"/>
        <dbReference type="ChEBI" id="CHEBI:16240"/>
        <dbReference type="ChEBI" id="CHEBI:58442"/>
        <dbReference type="ChEBI" id="CHEBI:58778"/>
        <dbReference type="EC" id="1.3.3.11"/>
    </reaction>
</comment>
<comment type="pathway">
    <text evidence="1">Cofactor biosynthesis; pyrroloquinoline quinone biosynthesis.</text>
</comment>
<comment type="similarity">
    <text evidence="1">Belongs to the PqqC family.</text>
</comment>
<protein>
    <recommendedName>
        <fullName evidence="1">Pyrroloquinoline-quinone synthase</fullName>
        <ecNumber evidence="1">1.3.3.11</ecNumber>
    </recommendedName>
    <alternativeName>
        <fullName evidence="1">Coenzyme PQQ synthesis protein C</fullName>
    </alternativeName>
    <alternativeName>
        <fullName evidence="1">Pyrroloquinoline quinone biosynthesis protein C</fullName>
    </alternativeName>
</protein>
<dbReference type="EC" id="1.3.3.11" evidence="1"/>
<dbReference type="EMBL" id="CP000050">
    <property type="protein sequence ID" value="AAY48241.1"/>
    <property type="molecule type" value="Genomic_DNA"/>
</dbReference>
<dbReference type="RefSeq" id="WP_011038061.1">
    <property type="nucleotide sequence ID" value="NZ_CP155948.1"/>
</dbReference>
<dbReference type="SMR" id="Q4UXI2"/>
<dbReference type="KEGG" id="xcb:XC_1171"/>
<dbReference type="HOGENOM" id="CLU_080136_0_0_6"/>
<dbReference type="UniPathway" id="UPA00539"/>
<dbReference type="Proteomes" id="UP000000420">
    <property type="component" value="Chromosome"/>
</dbReference>
<dbReference type="GO" id="GO:0033732">
    <property type="term" value="F:pyrroloquinoline-quinone synthase activity"/>
    <property type="evidence" value="ECO:0007669"/>
    <property type="project" value="UniProtKB-EC"/>
</dbReference>
<dbReference type="GO" id="GO:0018189">
    <property type="term" value="P:pyrroloquinoline quinone biosynthetic process"/>
    <property type="evidence" value="ECO:0007669"/>
    <property type="project" value="UniProtKB-UniRule"/>
</dbReference>
<dbReference type="GO" id="GO:0006790">
    <property type="term" value="P:sulfur compound metabolic process"/>
    <property type="evidence" value="ECO:0007669"/>
    <property type="project" value="UniProtKB-ARBA"/>
</dbReference>
<dbReference type="Gene3D" id="1.20.910.10">
    <property type="entry name" value="Heme oxygenase-like"/>
    <property type="match status" value="1"/>
</dbReference>
<dbReference type="HAMAP" id="MF_00654">
    <property type="entry name" value="PQQ_syn_PqqC"/>
    <property type="match status" value="1"/>
</dbReference>
<dbReference type="InterPro" id="IPR016084">
    <property type="entry name" value="Haem_Oase-like_multi-hlx"/>
</dbReference>
<dbReference type="InterPro" id="IPR011845">
    <property type="entry name" value="PqqC"/>
</dbReference>
<dbReference type="InterPro" id="IPR039068">
    <property type="entry name" value="PqqC-like"/>
</dbReference>
<dbReference type="InterPro" id="IPR004305">
    <property type="entry name" value="Thiaminase-2/PQQC"/>
</dbReference>
<dbReference type="NCBIfam" id="TIGR02111">
    <property type="entry name" value="PQQ_syn_pqqC"/>
    <property type="match status" value="1"/>
</dbReference>
<dbReference type="PANTHER" id="PTHR40279:SF3">
    <property type="entry name" value="4-AMINOBENZOATE SYNTHASE"/>
    <property type="match status" value="1"/>
</dbReference>
<dbReference type="PANTHER" id="PTHR40279">
    <property type="entry name" value="PQQC-LIKE PROTEIN"/>
    <property type="match status" value="1"/>
</dbReference>
<dbReference type="Pfam" id="PF03070">
    <property type="entry name" value="TENA_THI-4"/>
    <property type="match status" value="1"/>
</dbReference>
<dbReference type="SUPFAM" id="SSF48613">
    <property type="entry name" value="Heme oxygenase-like"/>
    <property type="match status" value="1"/>
</dbReference>
<proteinExistence type="inferred from homology"/>
<feature type="chain" id="PRO_1000061681" description="Pyrroloquinoline-quinone synthase">
    <location>
        <begin position="1"/>
        <end position="250"/>
    </location>
</feature>
<name>PQQC_XANC8</name>
<reference key="1">
    <citation type="journal article" date="2005" name="Genome Res.">
        <title>Comparative and functional genomic analyses of the pathogenicity of phytopathogen Xanthomonas campestris pv. campestris.</title>
        <authorList>
            <person name="Qian W."/>
            <person name="Jia Y."/>
            <person name="Ren S.-X."/>
            <person name="He Y.-Q."/>
            <person name="Feng J.-X."/>
            <person name="Lu L.-F."/>
            <person name="Sun Q."/>
            <person name="Ying G."/>
            <person name="Tang D.-J."/>
            <person name="Tang H."/>
            <person name="Wu W."/>
            <person name="Hao P."/>
            <person name="Wang L."/>
            <person name="Jiang B.-L."/>
            <person name="Zeng S."/>
            <person name="Gu W.-Y."/>
            <person name="Lu G."/>
            <person name="Rong L."/>
            <person name="Tian Y."/>
            <person name="Yao Z."/>
            <person name="Fu G."/>
            <person name="Chen B."/>
            <person name="Fang R."/>
            <person name="Qiang B."/>
            <person name="Chen Z."/>
            <person name="Zhao G.-P."/>
            <person name="Tang J.-L."/>
            <person name="He C."/>
        </authorList>
    </citation>
    <scope>NUCLEOTIDE SEQUENCE [LARGE SCALE GENOMIC DNA]</scope>
    <source>
        <strain>8004</strain>
    </source>
</reference>
<evidence type="ECO:0000255" key="1">
    <source>
        <dbReference type="HAMAP-Rule" id="MF_00654"/>
    </source>
</evidence>
<organism>
    <name type="scientific">Xanthomonas campestris pv. campestris (strain 8004)</name>
    <dbReference type="NCBI Taxonomy" id="314565"/>
    <lineage>
        <taxon>Bacteria</taxon>
        <taxon>Pseudomonadati</taxon>
        <taxon>Pseudomonadota</taxon>
        <taxon>Gammaproteobacteria</taxon>
        <taxon>Lysobacterales</taxon>
        <taxon>Lysobacteraceae</taxon>
        <taxon>Xanthomonas</taxon>
    </lineage>
</organism>
<keyword id="KW-0560">Oxidoreductase</keyword>
<keyword id="KW-0884">PQQ biosynthesis</keyword>
<gene>
    <name evidence="1" type="primary">pqqC</name>
    <name type="ordered locus">XC_1171</name>
</gene>
<sequence>MTALLSPDQLEADLRAIGARLYHDQHPFHALLHHGKLNRGQVQAWALNRFEYQRCIPLKDAAILARMEDPALRRIWRQRILDHDGNSPSDGGIARWLHLTDALGLPRELVESGRALLPGTRFAVQAYLHFVREKSLLEAIASSLTELFAPNIIGQRVAGMLQHYDFVSPEALAYFEHRLTEAPRDSDFALDYVKQHADTIEKQQLVKAALHFKCSVLWAQLDALHVAYVSPGVVWPDAFVPERDSKRAAA</sequence>
<accession>Q4UXI2</accession>